<evidence type="ECO:0000255" key="1">
    <source>
        <dbReference type="HAMAP-Rule" id="MF_00003"/>
    </source>
</evidence>
<evidence type="ECO:0000256" key="2">
    <source>
        <dbReference type="SAM" id="MobiDB-lite"/>
    </source>
</evidence>
<keyword id="KW-0963">Cytoplasm</keyword>
<keyword id="KW-1185">Reference proteome</keyword>
<keyword id="KW-0690">Ribosome biogenesis</keyword>
<reference key="1">
    <citation type="submission" date="2008-02" db="EMBL/GenBank/DDBJ databases">
        <title>Complete sequence of Shewanella woodyi ATCC 51908.</title>
        <authorList>
            <consortium name="US DOE Joint Genome Institute"/>
            <person name="Copeland A."/>
            <person name="Lucas S."/>
            <person name="Lapidus A."/>
            <person name="Glavina del Rio T."/>
            <person name="Dalin E."/>
            <person name="Tice H."/>
            <person name="Bruce D."/>
            <person name="Goodwin L."/>
            <person name="Pitluck S."/>
            <person name="Sims D."/>
            <person name="Brettin T."/>
            <person name="Detter J.C."/>
            <person name="Han C."/>
            <person name="Kuske C.R."/>
            <person name="Schmutz J."/>
            <person name="Larimer F."/>
            <person name="Land M."/>
            <person name="Hauser L."/>
            <person name="Kyrpides N."/>
            <person name="Lykidis A."/>
            <person name="Zhao J.-S."/>
            <person name="Richardson P."/>
        </authorList>
    </citation>
    <scope>NUCLEOTIDE SEQUENCE [LARGE SCALE GENOMIC DNA]</scope>
    <source>
        <strain>ATCC 51908 / MS32</strain>
    </source>
</reference>
<accession>B1KRQ9</accession>
<feature type="chain" id="PRO_1000088931" description="Ribosome-binding factor A">
    <location>
        <begin position="1"/>
        <end position="140"/>
    </location>
</feature>
<feature type="region of interest" description="Disordered" evidence="2">
    <location>
        <begin position="118"/>
        <end position="140"/>
    </location>
</feature>
<feature type="compositionally biased region" description="Basic and acidic residues" evidence="2">
    <location>
        <begin position="118"/>
        <end position="133"/>
    </location>
</feature>
<dbReference type="EMBL" id="CP000961">
    <property type="protein sequence ID" value="ACA87824.1"/>
    <property type="molecule type" value="Genomic_DNA"/>
</dbReference>
<dbReference type="RefSeq" id="WP_012326157.1">
    <property type="nucleotide sequence ID" value="NC_010506.1"/>
</dbReference>
<dbReference type="SMR" id="B1KRQ9"/>
<dbReference type="STRING" id="392500.Swoo_3560"/>
<dbReference type="KEGG" id="swd:Swoo_3560"/>
<dbReference type="eggNOG" id="COG0858">
    <property type="taxonomic scope" value="Bacteria"/>
</dbReference>
<dbReference type="HOGENOM" id="CLU_089475_6_3_6"/>
<dbReference type="Proteomes" id="UP000002168">
    <property type="component" value="Chromosome"/>
</dbReference>
<dbReference type="GO" id="GO:0005829">
    <property type="term" value="C:cytosol"/>
    <property type="evidence" value="ECO:0007669"/>
    <property type="project" value="TreeGrafter"/>
</dbReference>
<dbReference type="GO" id="GO:0043024">
    <property type="term" value="F:ribosomal small subunit binding"/>
    <property type="evidence" value="ECO:0007669"/>
    <property type="project" value="TreeGrafter"/>
</dbReference>
<dbReference type="GO" id="GO:0030490">
    <property type="term" value="P:maturation of SSU-rRNA"/>
    <property type="evidence" value="ECO:0007669"/>
    <property type="project" value="UniProtKB-UniRule"/>
</dbReference>
<dbReference type="FunFam" id="3.30.300.20:FF:000007">
    <property type="entry name" value="Ribosome-binding factor A"/>
    <property type="match status" value="1"/>
</dbReference>
<dbReference type="Gene3D" id="3.30.300.20">
    <property type="match status" value="1"/>
</dbReference>
<dbReference type="HAMAP" id="MF_00003">
    <property type="entry name" value="RbfA"/>
    <property type="match status" value="1"/>
</dbReference>
<dbReference type="InterPro" id="IPR015946">
    <property type="entry name" value="KH_dom-like_a/b"/>
</dbReference>
<dbReference type="InterPro" id="IPR000238">
    <property type="entry name" value="RbfA"/>
</dbReference>
<dbReference type="InterPro" id="IPR023799">
    <property type="entry name" value="RbfA_dom_sf"/>
</dbReference>
<dbReference type="InterPro" id="IPR020053">
    <property type="entry name" value="Ribosome-bd_factorA_CS"/>
</dbReference>
<dbReference type="NCBIfam" id="TIGR00082">
    <property type="entry name" value="rbfA"/>
    <property type="match status" value="1"/>
</dbReference>
<dbReference type="PANTHER" id="PTHR33515">
    <property type="entry name" value="RIBOSOME-BINDING FACTOR A, CHLOROPLASTIC-RELATED"/>
    <property type="match status" value="1"/>
</dbReference>
<dbReference type="PANTHER" id="PTHR33515:SF1">
    <property type="entry name" value="RIBOSOME-BINDING FACTOR A, CHLOROPLASTIC-RELATED"/>
    <property type="match status" value="1"/>
</dbReference>
<dbReference type="Pfam" id="PF02033">
    <property type="entry name" value="RBFA"/>
    <property type="match status" value="1"/>
</dbReference>
<dbReference type="SUPFAM" id="SSF89919">
    <property type="entry name" value="Ribosome-binding factor A, RbfA"/>
    <property type="match status" value="1"/>
</dbReference>
<dbReference type="PROSITE" id="PS01319">
    <property type="entry name" value="RBFA"/>
    <property type="match status" value="1"/>
</dbReference>
<organism>
    <name type="scientific">Shewanella woodyi (strain ATCC 51908 / MS32)</name>
    <dbReference type="NCBI Taxonomy" id="392500"/>
    <lineage>
        <taxon>Bacteria</taxon>
        <taxon>Pseudomonadati</taxon>
        <taxon>Pseudomonadota</taxon>
        <taxon>Gammaproteobacteria</taxon>
        <taxon>Alteromonadales</taxon>
        <taxon>Shewanellaceae</taxon>
        <taxon>Shewanella</taxon>
    </lineage>
</organism>
<sequence>MAREFSRTRRIAQQLQQELAQVLQRDIKDPRIGMVTVNDVEVSRDLSYAKVFVTFFEEDSKLVEEKLEALTTASGYVRSLVAGRMKLRVMPELRFVYDASLVEGMRMSNLVTRIIHDDEAKQQKHNGKDKTDTADSEGEE</sequence>
<protein>
    <recommendedName>
        <fullName evidence="1">Ribosome-binding factor A</fullName>
    </recommendedName>
</protein>
<comment type="function">
    <text evidence="1">One of several proteins that assist in the late maturation steps of the functional core of the 30S ribosomal subunit. Associates with free 30S ribosomal subunits (but not with 30S subunits that are part of 70S ribosomes or polysomes). Required for efficient processing of 16S rRNA. May interact with the 5'-terminal helix region of 16S rRNA.</text>
</comment>
<comment type="subunit">
    <text evidence="1">Monomer. Binds 30S ribosomal subunits, but not 50S ribosomal subunits or 70S ribosomes.</text>
</comment>
<comment type="subcellular location">
    <subcellularLocation>
        <location evidence="1">Cytoplasm</location>
    </subcellularLocation>
</comment>
<comment type="similarity">
    <text evidence="1">Belongs to the RbfA family.</text>
</comment>
<name>RBFA_SHEWM</name>
<gene>
    <name evidence="1" type="primary">rbfA</name>
    <name type="ordered locus">Swoo_3560</name>
</gene>
<proteinExistence type="inferred from homology"/>